<dbReference type="EC" id="3.5.4.13" evidence="1"/>
<dbReference type="EMBL" id="AM494475">
    <property type="protein sequence ID" value="CAM81251.1"/>
    <property type="molecule type" value="Genomic_DNA"/>
</dbReference>
<dbReference type="RefSeq" id="WP_011945172.1">
    <property type="nucleotide sequence ID" value="NC_009488.1"/>
</dbReference>
<dbReference type="SMR" id="A5CFN1"/>
<dbReference type="KEGG" id="ots:OTBS_2156"/>
<dbReference type="eggNOG" id="COG0717">
    <property type="taxonomic scope" value="Bacteria"/>
</dbReference>
<dbReference type="HOGENOM" id="CLU_087476_4_0_5"/>
<dbReference type="UniPathway" id="UPA00610">
    <property type="reaction ID" value="UER00665"/>
</dbReference>
<dbReference type="Proteomes" id="UP000001565">
    <property type="component" value="Chromosome"/>
</dbReference>
<dbReference type="GO" id="GO:0008829">
    <property type="term" value="F:dCTP deaminase activity"/>
    <property type="evidence" value="ECO:0007669"/>
    <property type="project" value="UniProtKB-UniRule"/>
</dbReference>
<dbReference type="GO" id="GO:0000166">
    <property type="term" value="F:nucleotide binding"/>
    <property type="evidence" value="ECO:0007669"/>
    <property type="project" value="UniProtKB-KW"/>
</dbReference>
<dbReference type="GO" id="GO:0006226">
    <property type="term" value="P:dUMP biosynthetic process"/>
    <property type="evidence" value="ECO:0007669"/>
    <property type="project" value="UniProtKB-UniPathway"/>
</dbReference>
<dbReference type="GO" id="GO:0006229">
    <property type="term" value="P:dUTP biosynthetic process"/>
    <property type="evidence" value="ECO:0007669"/>
    <property type="project" value="UniProtKB-UniRule"/>
</dbReference>
<dbReference type="CDD" id="cd07557">
    <property type="entry name" value="trimeric_dUTPase"/>
    <property type="match status" value="1"/>
</dbReference>
<dbReference type="FunFam" id="2.70.40.10:FF:000001">
    <property type="entry name" value="dCTP deaminase"/>
    <property type="match status" value="1"/>
</dbReference>
<dbReference type="Gene3D" id="2.70.40.10">
    <property type="match status" value="1"/>
</dbReference>
<dbReference type="HAMAP" id="MF_00146">
    <property type="entry name" value="dCTP_deaminase"/>
    <property type="match status" value="1"/>
</dbReference>
<dbReference type="InterPro" id="IPR011962">
    <property type="entry name" value="dCTP_deaminase"/>
</dbReference>
<dbReference type="InterPro" id="IPR036157">
    <property type="entry name" value="dUTPase-like_sf"/>
</dbReference>
<dbReference type="InterPro" id="IPR033704">
    <property type="entry name" value="dUTPase_trimeric"/>
</dbReference>
<dbReference type="NCBIfam" id="TIGR02274">
    <property type="entry name" value="dCTP_deam"/>
    <property type="match status" value="1"/>
</dbReference>
<dbReference type="PANTHER" id="PTHR42680">
    <property type="entry name" value="DCTP DEAMINASE"/>
    <property type="match status" value="1"/>
</dbReference>
<dbReference type="PANTHER" id="PTHR42680:SF3">
    <property type="entry name" value="DCTP DEAMINASE"/>
    <property type="match status" value="1"/>
</dbReference>
<dbReference type="Pfam" id="PF22769">
    <property type="entry name" value="DCD"/>
    <property type="match status" value="1"/>
</dbReference>
<dbReference type="SUPFAM" id="SSF51283">
    <property type="entry name" value="dUTPase-like"/>
    <property type="match status" value="1"/>
</dbReference>
<keyword id="KW-0378">Hydrolase</keyword>
<keyword id="KW-0546">Nucleotide metabolism</keyword>
<keyword id="KW-0547">Nucleotide-binding</keyword>
<keyword id="KW-1185">Reference proteome</keyword>
<gene>
    <name evidence="1" type="primary">dcd</name>
    <name type="ordered locus">OTBS_2156</name>
</gene>
<protein>
    <recommendedName>
        <fullName evidence="1">dCTP deaminase</fullName>
        <ecNumber evidence="1">3.5.4.13</ecNumber>
    </recommendedName>
    <alternativeName>
        <fullName evidence="1">Deoxycytidine triphosphate deaminase</fullName>
    </alternativeName>
</protein>
<feature type="chain" id="PRO_1000009777" description="dCTP deaminase">
    <location>
        <begin position="1"/>
        <end position="188"/>
    </location>
</feature>
<feature type="active site" description="Proton donor/acceptor" evidence="1">
    <location>
        <position position="137"/>
    </location>
</feature>
<feature type="binding site" evidence="1">
    <location>
        <begin position="111"/>
        <end position="116"/>
    </location>
    <ligand>
        <name>dCTP</name>
        <dbReference type="ChEBI" id="CHEBI:61481"/>
    </ligand>
</feature>
<feature type="binding site" evidence="1">
    <location>
        <begin position="135"/>
        <end position="137"/>
    </location>
    <ligand>
        <name>dCTP</name>
        <dbReference type="ChEBI" id="CHEBI:61481"/>
    </ligand>
</feature>
<feature type="binding site" evidence="1">
    <location>
        <position position="156"/>
    </location>
    <ligand>
        <name>dCTP</name>
        <dbReference type="ChEBI" id="CHEBI:61481"/>
    </ligand>
</feature>
<feature type="binding site" evidence="1">
    <location>
        <position position="170"/>
    </location>
    <ligand>
        <name>dCTP</name>
        <dbReference type="ChEBI" id="CHEBI:61481"/>
    </ligand>
</feature>
<feature type="binding site" evidence="1">
    <location>
        <position position="179"/>
    </location>
    <ligand>
        <name>dCTP</name>
        <dbReference type="ChEBI" id="CHEBI:61481"/>
    </ligand>
</feature>
<feature type="binding site" evidence="1">
    <location>
        <position position="180"/>
    </location>
    <ligand>
        <name>dCTP</name>
        <dbReference type="ChEBI" id="CHEBI:61481"/>
    </ligand>
</feature>
<accession>A5CFN1</accession>
<proteinExistence type="inferred from homology"/>
<comment type="function">
    <text evidence="1">Catalyzes the deamination of dCTP to dUTP.</text>
</comment>
<comment type="catalytic activity">
    <reaction evidence="1">
        <text>dCTP + H2O + H(+) = dUTP + NH4(+)</text>
        <dbReference type="Rhea" id="RHEA:22680"/>
        <dbReference type="ChEBI" id="CHEBI:15377"/>
        <dbReference type="ChEBI" id="CHEBI:15378"/>
        <dbReference type="ChEBI" id="CHEBI:28938"/>
        <dbReference type="ChEBI" id="CHEBI:61481"/>
        <dbReference type="ChEBI" id="CHEBI:61555"/>
        <dbReference type="EC" id="3.5.4.13"/>
    </reaction>
</comment>
<comment type="pathway">
    <text evidence="1">Pyrimidine metabolism; dUMP biosynthesis; dUMP from dCTP (dUTP route): step 1/2.</text>
</comment>
<comment type="subunit">
    <text evidence="1">Homotrimer.</text>
</comment>
<comment type="similarity">
    <text evidence="1">Belongs to the dCTP deaminase family.</text>
</comment>
<name>DCD_ORITB</name>
<evidence type="ECO:0000255" key="1">
    <source>
        <dbReference type="HAMAP-Rule" id="MF_00146"/>
    </source>
</evidence>
<organism>
    <name type="scientific">Orientia tsutsugamushi (strain Boryong)</name>
    <name type="common">Rickettsia tsutsugamushi</name>
    <dbReference type="NCBI Taxonomy" id="357244"/>
    <lineage>
        <taxon>Bacteria</taxon>
        <taxon>Pseudomonadati</taxon>
        <taxon>Pseudomonadota</taxon>
        <taxon>Alphaproteobacteria</taxon>
        <taxon>Rickettsiales</taxon>
        <taxon>Rickettsiaceae</taxon>
        <taxon>Rickettsieae</taxon>
        <taxon>Orientia</taxon>
    </lineage>
</organism>
<sequence length="188" mass="21151">MSIMSDNWIKKMAESKNMISPFVDKQVRARNNQQILSYGLSSYGYDARVSNEFKIFTNTKPSIIDPKKFDQDCLITKISDICIIPPNSFALGTTIEYFKMPRDVIAICIGKSTYARCGIIINVTPLEPECEGHITLEFSNTTPLPAKIYAGEGACQFLFFKGDQPCNTSYLDRYGRYTKQIGVTLPTV</sequence>
<reference key="1">
    <citation type="journal article" date="2007" name="Proc. Natl. Acad. Sci. U.S.A.">
        <title>The Orientia tsutsugamushi genome reveals massive proliferation of conjugative type IV secretion system and host-cell interaction genes.</title>
        <authorList>
            <person name="Cho N.-H."/>
            <person name="Kim H.-R."/>
            <person name="Lee J.-H."/>
            <person name="Kim S.-Y."/>
            <person name="Kim J."/>
            <person name="Cha S."/>
            <person name="Kim S.-Y."/>
            <person name="Darby A.C."/>
            <person name="Fuxelius H.-H."/>
            <person name="Yin J."/>
            <person name="Kim J.H."/>
            <person name="Kim J."/>
            <person name="Lee S.J."/>
            <person name="Koh Y.-S."/>
            <person name="Jang W.-J."/>
            <person name="Park K.-H."/>
            <person name="Andersson S.G.E."/>
            <person name="Choi M.-S."/>
            <person name="Kim I.-S."/>
        </authorList>
    </citation>
    <scope>NUCLEOTIDE SEQUENCE [LARGE SCALE GENOMIC DNA]</scope>
    <source>
        <strain>Boryong</strain>
    </source>
</reference>